<keyword id="KW-0007">Acetylation</keyword>
<keyword id="KW-0333">Golgi apparatus</keyword>
<keyword id="KW-0472">Membrane</keyword>
<keyword id="KW-0597">Phosphoprotein</keyword>
<keyword id="KW-1185">Reference proteome</keyword>
<keyword id="KW-0812">Transmembrane</keyword>
<keyword id="KW-1133">Transmembrane helix</keyword>
<name>RER1_PONAB</name>
<protein>
    <recommendedName>
        <fullName>Protein RER1</fullName>
    </recommendedName>
</protein>
<feature type="initiator methionine" description="Removed" evidence="2">
    <location>
        <position position="1"/>
    </location>
</feature>
<feature type="chain" id="PRO_0000261127" description="Protein RER1">
    <location>
        <begin position="2"/>
        <end position="196"/>
    </location>
</feature>
<feature type="transmembrane region" description="Helical" evidence="3">
    <location>
        <begin position="41"/>
        <end position="61"/>
    </location>
</feature>
<feature type="transmembrane region" description="Helical" evidence="3">
    <location>
        <begin position="63"/>
        <end position="83"/>
    </location>
</feature>
<feature type="transmembrane region" description="Helical" evidence="3">
    <location>
        <begin position="140"/>
        <end position="160"/>
    </location>
</feature>
<feature type="modified residue" description="N-acetylserine" evidence="2">
    <location>
        <position position="2"/>
    </location>
</feature>
<feature type="modified residue" description="Phosphoserine" evidence="2">
    <location>
        <position position="2"/>
    </location>
</feature>
<feature type="modified residue" description="Phosphoserine" evidence="2">
    <location>
        <position position="6"/>
    </location>
</feature>
<feature type="modified residue" description="Phosphoserine" evidence="2">
    <location>
        <position position="10"/>
    </location>
</feature>
<feature type="modified residue" description="Phosphoserine" evidence="2">
    <location>
        <position position="95"/>
    </location>
</feature>
<gene>
    <name type="primary">RER1</name>
</gene>
<organism>
    <name type="scientific">Pongo abelii</name>
    <name type="common">Sumatran orangutan</name>
    <name type="synonym">Pongo pygmaeus abelii</name>
    <dbReference type="NCBI Taxonomy" id="9601"/>
    <lineage>
        <taxon>Eukaryota</taxon>
        <taxon>Metazoa</taxon>
        <taxon>Chordata</taxon>
        <taxon>Craniata</taxon>
        <taxon>Vertebrata</taxon>
        <taxon>Euteleostomi</taxon>
        <taxon>Mammalia</taxon>
        <taxon>Eutheria</taxon>
        <taxon>Euarchontoglires</taxon>
        <taxon>Primates</taxon>
        <taxon>Haplorrhini</taxon>
        <taxon>Catarrhini</taxon>
        <taxon>Hominidae</taxon>
        <taxon>Pongo</taxon>
    </lineage>
</organism>
<proteinExistence type="evidence at transcript level"/>
<sequence>MSEGDSVGESVHGKPSVVYRFFTRLGQIYQSWLDKSTPYTAVRWVVTLGLSFVYMIRVYLLQGWYIVTYALGIYHLNLFIAFLSPKVDPSLMEDSDDGPSLPTKQNEEFRPFIRRLPEFKFWHAATKGILVAMVCTFFDAFNVPVFWPILVMYFIMLFCITMKRQIKHMIKYRYIPFTHGKRRYRGKEDAGKAFAS</sequence>
<evidence type="ECO:0000250" key="1"/>
<evidence type="ECO:0000250" key="2">
    <source>
        <dbReference type="UniProtKB" id="O15258"/>
    </source>
</evidence>
<evidence type="ECO:0000255" key="3"/>
<evidence type="ECO:0000305" key="4"/>
<accession>Q5R5U4</accession>
<comment type="function">
    <text evidence="1">Involved in the retrieval of endoplasmic reticulum membrane proteins from the early Golgi compartment.</text>
</comment>
<comment type="subcellular location">
    <subcellularLocation>
        <location evidence="1">Golgi apparatus membrane</location>
        <topology evidence="1">Multi-pass membrane protein</topology>
    </subcellularLocation>
</comment>
<comment type="similarity">
    <text evidence="4">Belongs to the RER1 family.</text>
</comment>
<dbReference type="EMBL" id="CR860759">
    <property type="protein sequence ID" value="CAH92872.1"/>
    <property type="molecule type" value="mRNA"/>
</dbReference>
<dbReference type="RefSeq" id="NP_001126680.1">
    <property type="nucleotide sequence ID" value="NM_001133208.1"/>
</dbReference>
<dbReference type="FunCoup" id="Q5R5U4">
    <property type="interactions" value="2724"/>
</dbReference>
<dbReference type="STRING" id="9601.ENSPPYP00000002294"/>
<dbReference type="Ensembl" id="ENSPPYT00000040483.1">
    <property type="protein sequence ID" value="ENSPPYP00000045072.1"/>
    <property type="gene ID" value="ENSPPYG00000038006.1"/>
</dbReference>
<dbReference type="GeneID" id="100173680"/>
<dbReference type="KEGG" id="pon:100173680"/>
<dbReference type="CTD" id="11079"/>
<dbReference type="eggNOG" id="KOG1688">
    <property type="taxonomic scope" value="Eukaryota"/>
</dbReference>
<dbReference type="GeneTree" id="ENSGT00510000047137"/>
<dbReference type="InParanoid" id="Q5R5U4"/>
<dbReference type="OrthoDB" id="448250at2759"/>
<dbReference type="Proteomes" id="UP000001595">
    <property type="component" value="Chromosome 1"/>
</dbReference>
<dbReference type="GO" id="GO:0005783">
    <property type="term" value="C:endoplasmic reticulum"/>
    <property type="evidence" value="ECO:0007669"/>
    <property type="project" value="GOC"/>
</dbReference>
<dbReference type="GO" id="GO:0000139">
    <property type="term" value="C:Golgi membrane"/>
    <property type="evidence" value="ECO:0007669"/>
    <property type="project" value="UniProtKB-SubCell"/>
</dbReference>
<dbReference type="GO" id="GO:0006621">
    <property type="term" value="P:protein retention in ER lumen"/>
    <property type="evidence" value="ECO:0007669"/>
    <property type="project" value="TreeGrafter"/>
</dbReference>
<dbReference type="GO" id="GO:0006890">
    <property type="term" value="P:retrograde vesicle-mediated transport, Golgi to endoplasmic reticulum"/>
    <property type="evidence" value="ECO:0007669"/>
    <property type="project" value="TreeGrafter"/>
</dbReference>
<dbReference type="InterPro" id="IPR004932">
    <property type="entry name" value="Rer1"/>
</dbReference>
<dbReference type="PANTHER" id="PTHR10743">
    <property type="entry name" value="PROTEIN RER1"/>
    <property type="match status" value="1"/>
</dbReference>
<dbReference type="PANTHER" id="PTHR10743:SF0">
    <property type="entry name" value="PROTEIN RER1"/>
    <property type="match status" value="1"/>
</dbReference>
<dbReference type="Pfam" id="PF03248">
    <property type="entry name" value="Rer1"/>
    <property type="match status" value="1"/>
</dbReference>
<dbReference type="PIRSF" id="PIRSF016013">
    <property type="entry name" value="AtER_Rer1p"/>
    <property type="match status" value="1"/>
</dbReference>
<reference key="1">
    <citation type="submission" date="2004-11" db="EMBL/GenBank/DDBJ databases">
        <authorList>
            <consortium name="The German cDNA consortium"/>
        </authorList>
    </citation>
    <scope>NUCLEOTIDE SEQUENCE [LARGE SCALE MRNA]</scope>
    <source>
        <tissue>Brain cortex</tissue>
    </source>
</reference>